<keyword id="KW-1003">Cell membrane</keyword>
<keyword id="KW-1015">Disulfide bond</keyword>
<keyword id="KW-0350">Heme biosynthesis</keyword>
<keyword id="KW-0408">Iron</keyword>
<keyword id="KW-0472">Membrane</keyword>
<keyword id="KW-0479">Metal-binding</keyword>
<keyword id="KW-0560">Oxidoreductase</keyword>
<keyword id="KW-1185">Reference proteome</keyword>
<keyword id="KW-0812">Transmembrane</keyword>
<keyword id="KW-1133">Transmembrane helix</keyword>
<organism>
    <name type="scientific">Staphylococcus saprophyticus subsp. saprophyticus (strain ATCC 15305 / DSM 20229 / NCIMB 8711 / NCTC 7292 / S-41)</name>
    <dbReference type="NCBI Taxonomy" id="342451"/>
    <lineage>
        <taxon>Bacteria</taxon>
        <taxon>Bacillati</taxon>
        <taxon>Bacillota</taxon>
        <taxon>Bacilli</taxon>
        <taxon>Bacillales</taxon>
        <taxon>Staphylococcaceae</taxon>
        <taxon>Staphylococcus</taxon>
    </lineage>
</organism>
<proteinExistence type="inferred from homology"/>
<reference key="1">
    <citation type="journal article" date="2005" name="Proc. Natl. Acad. Sci. U.S.A.">
        <title>Whole genome sequence of Staphylococcus saprophyticus reveals the pathogenesis of uncomplicated urinary tract infection.</title>
        <authorList>
            <person name="Kuroda M."/>
            <person name="Yamashita A."/>
            <person name="Hirakawa H."/>
            <person name="Kumano M."/>
            <person name="Morikawa K."/>
            <person name="Higashide M."/>
            <person name="Maruyama A."/>
            <person name="Inose Y."/>
            <person name="Matoba K."/>
            <person name="Toh H."/>
            <person name="Kuhara S."/>
            <person name="Hattori M."/>
            <person name="Ohta T."/>
        </authorList>
    </citation>
    <scope>NUCLEOTIDE SEQUENCE [LARGE SCALE GENOMIC DNA]</scope>
    <source>
        <strain>ATCC 15305 / DSM 20229 / NCIMB 8711 / NCTC 7292 / S-41</strain>
    </source>
</reference>
<accession>Q49WP0</accession>
<sequence>MFSKKNLKWLSVLATVIMAFVQLGGALVTKTGSADGCGSDWPLCHGAFLPQNLPIQTLIELSHRAVSGLSLIVVLWLVIVAWKHIGYIKEVKPLSCISVGFLLIQALVGAAAVMWQQNAYVLALHFGISLISFSSVFVLTLIIYEVDRKYEADELFIRKPLRIYTWIMALIVYMTIYTGALVRHKEASLAYGQWPLPFNDLMPHNVQDWVNLTHRGMALIAFIWILITFIHAVNNYRENRTIRYGYTAAFILVILQVTTGALSIITEVNLFIALLHALFITLLFGLIAYFIILMLRTIRSGG</sequence>
<evidence type="ECO:0000255" key="1">
    <source>
        <dbReference type="HAMAP-Rule" id="MF_01664"/>
    </source>
</evidence>
<comment type="function">
    <text evidence="1">Catalyzes the conversion of heme O to heme A by two successive hydroxylations of the methyl group at C8. The first hydroxylation forms heme I, the second hydroxylation results in an unstable dihydroxymethyl group, which spontaneously dehydrates, resulting in the formyl group of heme A.</text>
</comment>
<comment type="catalytic activity">
    <reaction evidence="1">
        <text>Fe(II)-heme o + 2 A + H2O = Fe(II)-heme a + 2 AH2</text>
        <dbReference type="Rhea" id="RHEA:63388"/>
        <dbReference type="ChEBI" id="CHEBI:13193"/>
        <dbReference type="ChEBI" id="CHEBI:15377"/>
        <dbReference type="ChEBI" id="CHEBI:17499"/>
        <dbReference type="ChEBI" id="CHEBI:60530"/>
        <dbReference type="ChEBI" id="CHEBI:61715"/>
        <dbReference type="EC" id="1.17.99.9"/>
    </reaction>
    <physiologicalReaction direction="left-to-right" evidence="1">
        <dbReference type="Rhea" id="RHEA:63389"/>
    </physiologicalReaction>
</comment>
<comment type="cofactor">
    <cofactor evidence="1">
        <name>heme b</name>
        <dbReference type="ChEBI" id="CHEBI:60344"/>
    </cofactor>
</comment>
<comment type="pathway">
    <text evidence="1">Porphyrin-containing compound metabolism; heme A biosynthesis; heme A from heme O: step 1/1.</text>
</comment>
<comment type="subunit">
    <text evidence="1">Interacts with CtaB.</text>
</comment>
<comment type="subcellular location">
    <subcellularLocation>
        <location evidence="1">Cell membrane</location>
        <topology evidence="1">Multi-pass membrane protein</topology>
    </subcellularLocation>
</comment>
<comment type="domain">
    <text evidence="1">The N-half (TM1-TM4) and C-half (TM5-TM8) domains are connected by an intracellular loop. Each domain is formed from four-helix bundles and they align in a pseudo twofold symmetry manner. The N-half domain is the substrate-heme O binding domain and the C-half domain is the cofactor heme B binding domain.</text>
</comment>
<comment type="domain">
    <text evidence="1">The cysteines of disulfide bond Cys-37 and Cys-44 may be involved in transfer of reducing equivalents from quinol in the membrane to the active site of the enzyme.</text>
</comment>
<comment type="similarity">
    <text evidence="1">Belongs to the COX15/CtaA family. Type 1 subfamily.</text>
</comment>
<name>CTAA_STAS1</name>
<dbReference type="EC" id="1.17.99.9" evidence="1"/>
<dbReference type="EMBL" id="AP008934">
    <property type="protein sequence ID" value="BAE18819.1"/>
    <property type="molecule type" value="Genomic_DNA"/>
</dbReference>
<dbReference type="RefSeq" id="WP_011303402.1">
    <property type="nucleotide sequence ID" value="NZ_MTGA01000039.1"/>
</dbReference>
<dbReference type="SMR" id="Q49WP0"/>
<dbReference type="DNASU" id="3616485"/>
<dbReference type="KEGG" id="ssp:SSP1674"/>
<dbReference type="eggNOG" id="COG1612">
    <property type="taxonomic scope" value="Bacteria"/>
</dbReference>
<dbReference type="HOGENOM" id="CLU_041525_3_1_9"/>
<dbReference type="OrthoDB" id="9816428at2"/>
<dbReference type="UniPathway" id="UPA00269">
    <property type="reaction ID" value="UER00713"/>
</dbReference>
<dbReference type="Proteomes" id="UP000006371">
    <property type="component" value="Chromosome"/>
</dbReference>
<dbReference type="GO" id="GO:0005886">
    <property type="term" value="C:plasma membrane"/>
    <property type="evidence" value="ECO:0007669"/>
    <property type="project" value="UniProtKB-SubCell"/>
</dbReference>
<dbReference type="GO" id="GO:0046872">
    <property type="term" value="F:metal ion binding"/>
    <property type="evidence" value="ECO:0007669"/>
    <property type="project" value="UniProtKB-KW"/>
</dbReference>
<dbReference type="GO" id="GO:0016653">
    <property type="term" value="F:oxidoreductase activity, acting on NAD(P)H, heme protein as acceptor"/>
    <property type="evidence" value="ECO:0007669"/>
    <property type="project" value="InterPro"/>
</dbReference>
<dbReference type="GO" id="GO:0006784">
    <property type="term" value="P:heme A biosynthetic process"/>
    <property type="evidence" value="ECO:0007669"/>
    <property type="project" value="UniProtKB-UniRule"/>
</dbReference>
<dbReference type="HAMAP" id="MF_01664">
    <property type="entry name" value="HemeA_synth_type1"/>
    <property type="match status" value="1"/>
</dbReference>
<dbReference type="InterPro" id="IPR003780">
    <property type="entry name" value="COX15/CtaA_fam"/>
</dbReference>
<dbReference type="InterPro" id="IPR050450">
    <property type="entry name" value="COX15/CtaA_HemeA_synthase"/>
</dbReference>
<dbReference type="InterPro" id="IPR023755">
    <property type="entry name" value="HemeA_Synthase_type1"/>
</dbReference>
<dbReference type="PANTHER" id="PTHR35457">
    <property type="entry name" value="HEME A SYNTHASE"/>
    <property type="match status" value="1"/>
</dbReference>
<dbReference type="PANTHER" id="PTHR35457:SF1">
    <property type="entry name" value="HEME A SYNTHASE"/>
    <property type="match status" value="1"/>
</dbReference>
<dbReference type="Pfam" id="PF02628">
    <property type="entry name" value="COX15-CtaA"/>
    <property type="match status" value="1"/>
</dbReference>
<feature type="chain" id="PRO_0000349004" description="Heme A synthase">
    <location>
        <begin position="1"/>
        <end position="302"/>
    </location>
</feature>
<feature type="topological domain" description="Cytoplasmic" evidence="1">
    <location>
        <begin position="1"/>
        <end position="8"/>
    </location>
</feature>
<feature type="transmembrane region" description="Helical" evidence="1">
    <location>
        <begin position="9"/>
        <end position="29"/>
    </location>
</feature>
<feature type="topological domain" description="Extracellular" evidence="1">
    <location>
        <begin position="30"/>
        <end position="67"/>
    </location>
</feature>
<feature type="transmembrane region" description="Helical" evidence="1">
    <location>
        <begin position="68"/>
        <end position="88"/>
    </location>
</feature>
<feature type="topological domain" description="Cytoplasmic" evidence="1">
    <location>
        <begin position="89"/>
        <end position="93"/>
    </location>
</feature>
<feature type="transmembrane region" description="Helical" evidence="1">
    <location>
        <begin position="94"/>
        <end position="114"/>
    </location>
</feature>
<feature type="topological domain" description="Extracellular" evidence="1">
    <location>
        <begin position="115"/>
        <end position="122"/>
    </location>
</feature>
<feature type="transmembrane region" description="Helical" evidence="1">
    <location>
        <begin position="123"/>
        <end position="143"/>
    </location>
</feature>
<feature type="topological domain" description="Cytoplasmic" evidence="1">
    <location>
        <begin position="144"/>
        <end position="161"/>
    </location>
</feature>
<feature type="transmembrane region" description="Helical" evidence="1">
    <location>
        <begin position="162"/>
        <end position="182"/>
    </location>
</feature>
<feature type="topological domain" description="Extracellular" evidence="1">
    <location>
        <begin position="183"/>
        <end position="215"/>
    </location>
</feature>
<feature type="transmembrane region" description="Helical" evidence="1">
    <location>
        <begin position="216"/>
        <end position="236"/>
    </location>
</feature>
<feature type="topological domain" description="Cytoplasmic" evidence="1">
    <location>
        <begin position="237"/>
        <end position="244"/>
    </location>
</feature>
<feature type="transmembrane region" description="Helical" evidence="1">
    <location>
        <begin position="245"/>
        <end position="265"/>
    </location>
</feature>
<feature type="topological domain" description="Extracellular" evidence="1">
    <location>
        <begin position="266"/>
        <end position="271"/>
    </location>
</feature>
<feature type="transmembrane region" description="Helical" evidence="1">
    <location>
        <begin position="272"/>
        <end position="292"/>
    </location>
</feature>
<feature type="topological domain" description="Cytoplasmic" evidence="1">
    <location>
        <begin position="293"/>
        <end position="302"/>
    </location>
</feature>
<feature type="active site" evidence="1">
    <location>
        <position position="60"/>
    </location>
</feature>
<feature type="binding site" description="axial binding residue" evidence="1">
    <location>
        <position position="63"/>
    </location>
    <ligand>
        <name>heme o</name>
        <dbReference type="ChEBI" id="CHEBI:24480"/>
    </ligand>
    <ligandPart>
        <name>Fe</name>
        <dbReference type="ChEBI" id="CHEBI:18248"/>
    </ligandPart>
</feature>
<feature type="binding site" description="axial binding residue" evidence="1">
    <location>
        <position position="125"/>
    </location>
    <ligand>
        <name>heme o</name>
        <dbReference type="ChEBI" id="CHEBI:24480"/>
    </ligand>
    <ligandPart>
        <name>Fe</name>
        <dbReference type="ChEBI" id="CHEBI:18248"/>
    </ligandPart>
</feature>
<feature type="binding site" description="axial binding residue" evidence="1">
    <location>
        <position position="214"/>
    </location>
    <ligand>
        <name>heme b</name>
        <dbReference type="ChEBI" id="CHEBI:60344"/>
    </ligand>
    <ligandPart>
        <name>Fe</name>
        <dbReference type="ChEBI" id="CHEBI:18248"/>
    </ligandPart>
</feature>
<feature type="binding site" description="axial binding residue" evidence="1">
    <location>
        <position position="276"/>
    </location>
    <ligand>
        <name>heme b</name>
        <dbReference type="ChEBI" id="CHEBI:60344"/>
    </ligand>
    <ligandPart>
        <name>Fe</name>
        <dbReference type="ChEBI" id="CHEBI:18248"/>
    </ligandPart>
</feature>
<feature type="disulfide bond" description="Essential for catalytic activity" evidence="1">
    <location>
        <begin position="37"/>
        <end position="44"/>
    </location>
</feature>
<gene>
    <name evidence="1" type="primary">ctaA</name>
    <name type="ordered locus">SSP1674</name>
</gene>
<protein>
    <recommendedName>
        <fullName evidence="1">Heme A synthase</fullName>
        <shortName evidence="1">HAS</shortName>
        <ecNumber evidence="1">1.17.99.9</ecNumber>
    </recommendedName>
    <alternativeName>
        <fullName evidence="1">Cytochrome aa3-controlling protein</fullName>
    </alternativeName>
</protein>